<keyword id="KW-0002">3D-structure</keyword>
<keyword id="KW-1064">Adaptive immunity</keyword>
<keyword id="KW-0025">Alternative splicing</keyword>
<keyword id="KW-1003">Cell membrane</keyword>
<keyword id="KW-0225">Disease variant</keyword>
<keyword id="KW-1015">Disulfide bond</keyword>
<keyword id="KW-0325">Glycoprotein</keyword>
<keyword id="KW-0391">Immunity</keyword>
<keyword id="KW-0393">Immunoglobulin domain</keyword>
<keyword id="KW-0449">Lipoprotein</keyword>
<keyword id="KW-0472">Membrane</keyword>
<keyword id="KW-0564">Palmitate</keyword>
<keyword id="KW-1267">Proteomics identification</keyword>
<keyword id="KW-1185">Reference proteome</keyword>
<keyword id="KW-0964">Secreted</keyword>
<keyword id="KW-0732">Signal</keyword>
<keyword id="KW-0812">Transmembrane</keyword>
<keyword id="KW-1133">Transmembrane helix</keyword>
<sequence length="235" mass="25729">MALPVTALLLPLALLLHAARPSQFRVSPLDRTWNLGETVELKCQVLLSNPTSGCSWLFQPRGAAASPTFLLYLSQNKPKAAEGLDTQRFSGKRLGDTFVLTLSDFRRENEGYYFCSALSNSIMYFSHFVPVFLPAKPTTTPAPRPPTPAPTIASQPLSLRPEACRPAAGGAVHTRGLDFACDIYIWAPLAGTCGVLLLSLVITLYCNHRNRRRVCKCPRPVVKSGDKPSLSARYV</sequence>
<gene>
    <name type="primary">CD8A</name>
    <name type="synonym">MAL</name>
</gene>
<evidence type="ECO:0000255" key="1"/>
<evidence type="ECO:0000269" key="2">
    <source>
    </source>
</evidence>
<evidence type="ECO:0000269" key="3">
    <source>
    </source>
</evidence>
<evidence type="ECO:0000269" key="4">
    <source>
    </source>
</evidence>
<evidence type="ECO:0000269" key="5">
    <source>
    </source>
</evidence>
<evidence type="ECO:0000269" key="6">
    <source>
    </source>
</evidence>
<evidence type="ECO:0000269" key="7">
    <source>
    </source>
</evidence>
<evidence type="ECO:0000269" key="8">
    <source>
    </source>
</evidence>
<evidence type="ECO:0000269" key="9">
    <source>
    </source>
</evidence>
<evidence type="ECO:0000269" key="10">
    <source>
    </source>
</evidence>
<evidence type="ECO:0000269" key="11">
    <source>
    </source>
</evidence>
<evidence type="ECO:0000269" key="12">
    <source>
    </source>
</evidence>
<evidence type="ECO:0000269" key="13">
    <source>
    </source>
</evidence>
<evidence type="ECO:0000269" key="14">
    <source>
    </source>
</evidence>
<evidence type="ECO:0000269" key="15">
    <source>
    </source>
</evidence>
<evidence type="ECO:0000269" key="16">
    <source>
    </source>
</evidence>
<evidence type="ECO:0000269" key="17">
    <source>
    </source>
</evidence>
<evidence type="ECO:0000303" key="18">
    <source>
    </source>
</evidence>
<evidence type="ECO:0000305" key="19"/>
<evidence type="ECO:0007829" key="20">
    <source>
        <dbReference type="PDB" id="2HP4"/>
    </source>
</evidence>
<evidence type="ECO:0007829" key="21">
    <source>
        <dbReference type="PDB" id="7UMG"/>
    </source>
</evidence>
<evidence type="ECO:0007829" key="22">
    <source>
        <dbReference type="PDB" id="8EW6"/>
    </source>
</evidence>
<protein>
    <recommendedName>
        <fullName>T-cell surface glycoprotein CD8 alpha chain</fullName>
    </recommendedName>
    <alternativeName>
        <fullName>T-lymphocyte differentiation antigen T8/Leu-2</fullName>
    </alternativeName>
    <cdAntigenName>CD8a</cdAntigenName>
</protein>
<feature type="signal peptide">
    <location>
        <begin position="1"/>
        <end position="21"/>
    </location>
</feature>
<feature type="chain" id="PRO_0000014638" description="T-cell surface glycoprotein CD8 alpha chain">
    <location>
        <begin position="22"/>
        <end position="235"/>
    </location>
</feature>
<feature type="topological domain" description="Extracellular" evidence="1">
    <location>
        <begin position="22"/>
        <end position="182"/>
    </location>
</feature>
<feature type="transmembrane region" description="Helical" evidence="1">
    <location>
        <begin position="183"/>
        <end position="203"/>
    </location>
</feature>
<feature type="topological domain" description="Cytoplasmic" evidence="1">
    <location>
        <begin position="204"/>
        <end position="235"/>
    </location>
</feature>
<feature type="domain" description="Ig-like V-type">
    <location>
        <begin position="22"/>
        <end position="135"/>
    </location>
</feature>
<feature type="lipid moiety-binding region" description="S-palmitoyl cysteine" evidence="8">
    <location>
        <position position="206"/>
    </location>
</feature>
<feature type="disulfide bond" evidence="6 17">
    <location>
        <begin position="43"/>
        <end position="115"/>
    </location>
</feature>
<feature type="splice variant" id="VSP_054438" description="In isoform 3." evidence="18">
    <original>M</original>
    <variation>MRNQAPGRPKGATFPPRRPTGSRAPPLAPELRAKQRPGERVM</variation>
    <location>
        <position position="1"/>
    </location>
</feature>
<feature type="splice variant" id="VSP_012653" description="In isoform 2." evidence="19">
    <original>VHTRGLDFACDIYIWAPLAGTCGVLLLSLVITLYCNHR</original>
    <variation>G</variation>
    <location>
        <begin position="172"/>
        <end position="209"/>
    </location>
</feature>
<feature type="sequence variant" id="VAR_021020" description="In IMD116; prevents CD8 expression; dbSNP:rs121918660." evidence="2 9">
    <original>G</original>
    <variation>S</variation>
    <location>
        <position position="111"/>
    </location>
</feature>
<feature type="mutagenesis site" description="Prevents CD8 expression." evidence="2">
    <original>G</original>
    <variation>R</variation>
    <location>
        <position position="111"/>
    </location>
</feature>
<feature type="mutagenesis site" description="Complete loss of palmitoylation." evidence="8">
    <original>C</original>
    <variation>A</variation>
    <location>
        <position position="206"/>
    </location>
</feature>
<feature type="strand" evidence="22">
    <location>
        <begin position="24"/>
        <end position="27"/>
    </location>
</feature>
<feature type="strand" evidence="22">
    <location>
        <begin position="39"/>
        <end position="45"/>
    </location>
</feature>
<feature type="strand" evidence="22">
    <location>
        <begin position="54"/>
        <end position="63"/>
    </location>
</feature>
<feature type="strand" evidence="22">
    <location>
        <begin position="68"/>
        <end position="73"/>
    </location>
</feature>
<feature type="strand" evidence="21">
    <location>
        <begin position="74"/>
        <end position="76"/>
    </location>
</feature>
<feature type="turn" evidence="20">
    <location>
        <begin position="86"/>
        <end position="88"/>
    </location>
</feature>
<feature type="strand" evidence="22">
    <location>
        <begin position="89"/>
        <end position="94"/>
    </location>
</feature>
<feature type="strand" evidence="22">
    <location>
        <begin position="97"/>
        <end position="104"/>
    </location>
</feature>
<feature type="helix" evidence="22">
    <location>
        <begin position="107"/>
        <end position="109"/>
    </location>
</feature>
<feature type="strand" evidence="22">
    <location>
        <begin position="111"/>
        <end position="119"/>
    </location>
</feature>
<feature type="strand" evidence="22">
    <location>
        <begin position="122"/>
        <end position="125"/>
    </location>
</feature>
<feature type="strand" evidence="22">
    <location>
        <begin position="129"/>
        <end position="131"/>
    </location>
</feature>
<accession>P01732</accession>
<accession>B4DT80</accession>
<accession>D6W5M8</accession>
<accession>Q13970</accession>
<accession>Q4ZG17</accession>
<comment type="function">
    <text evidence="7 10 11 13">Integral membrane glycoprotein that plays an essential role in the immune response and serves multiple functions in responses against both external and internal offenses. In T-cells, functions primarily as a coreceptor for MHC class I molecule:peptide complex. The antigens presented by class I peptides are derived from cytosolic proteins while class II derived from extracellular proteins. Interacts simultaneously with the T-cell receptor (TCR) and the MHC class I proteins presented by antigen presenting cells (APCs). In turn, recruits the Src kinase LCK to the vicinity of the TCR-CD3 complex. LCK then initiates different intracellular signaling pathways by phosphorylating various substrates ultimately leading to lymphokine production, motility, adhesion and activation of cytotoxic T-lymphocytes (CTLs). This mechanism enables CTLs to recognize and eliminate infected cells and tumor cells. In NK-cells, the presence of CD8A homodimers at the cell surface provides a survival mechanism allowing conjugation and lysis of multiple target cells. CD8A homodimer molecules also promote the survival and differentiation of activated lymphocytes into memory CD8 T-cells.</text>
</comment>
<comment type="subunit">
    <text evidence="3 4 14 15 17">Forms disulfide-linked heterodimers with CD8B at the cell surface. Also forms homodimers in several cell types including NK-cells or peripheral blood T-lymphocytes. Interacts with the MHC class I HLA-A/B2M dimer. One HLA-A molecule (mainly via nonpolymorphic alpha-3 domain) interacts with one CD8A homodimer (via CDR-like loop) (PubMed:2784196, PubMed:9177355). Interacts with LCK in a zinc-dependent manner. Interacts with HLA-G; this interaction is direct and might down-regulate T cell receptor signaling.</text>
</comment>
<comment type="subcellular location">
    <molecule>Isoform 1</molecule>
    <subcellularLocation>
        <location evidence="5 8 10">Cell membrane</location>
        <topology>Single-pass type I membrane protein</topology>
    </subcellularLocation>
    <text evidence="8">CD8A localizes to lipid rafts only when associated with its partner CD8B.</text>
</comment>
<comment type="subcellular location">
    <molecule>Isoform 2</molecule>
    <subcellularLocation>
        <location evidence="16">Secreted</location>
    </subcellularLocation>
</comment>
<comment type="alternative products">
    <event type="alternative splicing"/>
    <isoform>
        <id>P01732-1</id>
        <name>1</name>
        <name>membrane</name>
        <name>mCD8alpha</name>
        <sequence type="displayed"/>
    </isoform>
    <isoform>
        <id>P01732-2</id>
        <name>2</name>
        <name>secreted</name>
        <name>sCD8alpha</name>
        <sequence type="described" ref="VSP_012653"/>
    </isoform>
    <isoform>
        <id>P01732-3</id>
        <name>3</name>
        <sequence type="described" ref="VSP_054438"/>
    </isoform>
</comment>
<comment type="tissue specificity">
    <text evidence="7 10 13">CD8 on thymus-derived T-cells usually consists of a disulfide-linked alpha/CD8A and a beta/CD8B chain. Less frequently, CD8 can be expressed as a CD8A homodimer. A subset of natural killer cells, memory T-cells, intraepithelial lymphocytes, monocytes and dendritic cells expresses CD8A homodimers. Expressed at the cell surface of plasmacytoid dendritic cells upon herpes simplex virus-1 stimulation.</text>
</comment>
<comment type="PTM">
    <text evidence="8">Palmitoylated, but association with CD8B seems to be more important for the enrichment of CD8A in lipid rafts.</text>
</comment>
<comment type="PTM">
    <text evidence="5">O-glycosylated.</text>
</comment>
<comment type="PTM">
    <text evidence="12">Phosphorylated in cytotoxic T-lymphocytes (CTLs) following activation.</text>
</comment>
<comment type="disease" evidence="2 9">
    <disease id="DI-01560">
        <name>Immunodeficiency 116</name>
        <acronym>IMD116</acronym>
        <description>An autosomal recessive immunologic defect characterized by absence of CD8+ cells, leading to recurrent bacterial infections.</description>
        <dbReference type="MIM" id="608957"/>
    </disease>
    <text>The disease is caused by variants affecting the gene represented in this entry.</text>
</comment>
<comment type="online information" name="CD8Abase">
    <link uri="https://databases.lovd.nl/shared/genes/CD8A"/>
    <text>CD8A mutation db</text>
</comment>
<comment type="online information" name="Wikipedia">
    <link uri="https://en.wikipedia.org/wiki/CD8"/>
    <text>CD8 entry</text>
</comment>
<organism>
    <name type="scientific">Homo sapiens</name>
    <name type="common">Human</name>
    <dbReference type="NCBI Taxonomy" id="9606"/>
    <lineage>
        <taxon>Eukaryota</taxon>
        <taxon>Metazoa</taxon>
        <taxon>Chordata</taxon>
        <taxon>Craniata</taxon>
        <taxon>Vertebrata</taxon>
        <taxon>Euteleostomi</taxon>
        <taxon>Mammalia</taxon>
        <taxon>Eutheria</taxon>
        <taxon>Euarchontoglires</taxon>
        <taxon>Primates</taxon>
        <taxon>Haplorrhini</taxon>
        <taxon>Catarrhini</taxon>
        <taxon>Hominidae</taxon>
        <taxon>Homo</taxon>
    </lineage>
</organism>
<proteinExistence type="evidence at protein level"/>
<reference key="1">
    <citation type="journal article" date="1985" name="Cell">
        <title>The isolation and sequence of the gene encoding T8: a molecule defining functional classes of T lymphocytes.</title>
        <authorList>
            <person name="Littman D.R."/>
            <person name="Thomas Y."/>
            <person name="Maddon P.J."/>
            <person name="Chess L."/>
            <person name="Axel R."/>
        </authorList>
    </citation>
    <scope>NUCLEOTIDE SEQUENCE [MRNA] (ISOFORM 1)</scope>
</reference>
<reference key="2">
    <citation type="journal article" date="1985" name="Behring Inst. Mitt.">
        <title>Structure of Leu-2/T8 as deduced from the sequence of a cDNA clone.</title>
        <authorList>
            <person name="Parnes J.R."/>
            <person name="Sizer K.C."/>
            <person name="Sukhatme V.P."/>
            <person name="Hunkapiller T."/>
        </authorList>
    </citation>
    <scope>NUCLEOTIDE SEQUENCE (ISOFORM 1)</scope>
</reference>
<reference key="3">
    <citation type="journal article" date="1985" name="Cell">
        <title>The T cell differentiation antigen Leu-2/T8 is homologous to immunoglobulin and T cell receptor variable regions.</title>
        <authorList>
            <person name="Sukhatme V.P."/>
            <person name="Sizer K.C."/>
            <person name="Vollmer A.C."/>
            <person name="Hunkapiller T."/>
            <person name="Parnes J.R."/>
        </authorList>
    </citation>
    <scope>NUCLEOTIDE SEQUENCE [MRNA] (ISOFORM 1)</scope>
</reference>
<reference key="4">
    <citation type="journal article" date="1989" name="Immunogenetics">
        <title>Structure and expression of the gene encoding CD8 alpha chain (Leu-2/T8).</title>
        <authorList>
            <person name="Nakayama K."/>
            <person name="Tokito S."/>
            <person name="Okumura K."/>
            <person name="Nakauchi H."/>
        </authorList>
    </citation>
    <scope>NUCLEOTIDE SEQUENCE [GENOMIC DNA]</scope>
</reference>
<reference key="5">
    <citation type="journal article" date="1989" name="J. Immunol.">
        <title>Alternatively spliced mRNA encodes a secreted form of human CD8 alpha. Characterization of the human CD8 alpha gene.</title>
        <authorList>
            <person name="Norment A.M."/>
            <person name="Lonberg N."/>
            <person name="Lacy E."/>
            <person name="Littman D.R."/>
        </authorList>
    </citation>
    <scope>NUCLEOTIDE SEQUENCE [GENOMIC DNA] (ISOFORM 2)</scope>
    <scope>ALTERNATIVE SPLICING</scope>
</reference>
<reference key="6">
    <citation type="journal article" date="2004" name="Nat. Genet.">
        <title>Complete sequencing and characterization of 21,243 full-length human cDNAs.</title>
        <authorList>
            <person name="Ota T."/>
            <person name="Suzuki Y."/>
            <person name="Nishikawa T."/>
            <person name="Otsuki T."/>
            <person name="Sugiyama T."/>
            <person name="Irie R."/>
            <person name="Wakamatsu A."/>
            <person name="Hayashi K."/>
            <person name="Sato H."/>
            <person name="Nagai K."/>
            <person name="Kimura K."/>
            <person name="Makita H."/>
            <person name="Sekine M."/>
            <person name="Obayashi M."/>
            <person name="Nishi T."/>
            <person name="Shibahara T."/>
            <person name="Tanaka T."/>
            <person name="Ishii S."/>
            <person name="Yamamoto J."/>
            <person name="Saito K."/>
            <person name="Kawai Y."/>
            <person name="Isono Y."/>
            <person name="Nakamura Y."/>
            <person name="Nagahari K."/>
            <person name="Murakami K."/>
            <person name="Yasuda T."/>
            <person name="Iwayanagi T."/>
            <person name="Wagatsuma M."/>
            <person name="Shiratori A."/>
            <person name="Sudo H."/>
            <person name="Hosoiri T."/>
            <person name="Kaku Y."/>
            <person name="Kodaira H."/>
            <person name="Kondo H."/>
            <person name="Sugawara M."/>
            <person name="Takahashi M."/>
            <person name="Kanda K."/>
            <person name="Yokoi T."/>
            <person name="Furuya T."/>
            <person name="Kikkawa E."/>
            <person name="Omura Y."/>
            <person name="Abe K."/>
            <person name="Kamihara K."/>
            <person name="Katsuta N."/>
            <person name="Sato K."/>
            <person name="Tanikawa M."/>
            <person name="Yamazaki M."/>
            <person name="Ninomiya K."/>
            <person name="Ishibashi T."/>
            <person name="Yamashita H."/>
            <person name="Murakawa K."/>
            <person name="Fujimori K."/>
            <person name="Tanai H."/>
            <person name="Kimata M."/>
            <person name="Watanabe M."/>
            <person name="Hiraoka S."/>
            <person name="Chiba Y."/>
            <person name="Ishida S."/>
            <person name="Ono Y."/>
            <person name="Takiguchi S."/>
            <person name="Watanabe S."/>
            <person name="Yosida M."/>
            <person name="Hotuta T."/>
            <person name="Kusano J."/>
            <person name="Kanehori K."/>
            <person name="Takahashi-Fujii A."/>
            <person name="Hara H."/>
            <person name="Tanase T.-O."/>
            <person name="Nomura Y."/>
            <person name="Togiya S."/>
            <person name="Komai F."/>
            <person name="Hara R."/>
            <person name="Takeuchi K."/>
            <person name="Arita M."/>
            <person name="Imose N."/>
            <person name="Musashino K."/>
            <person name="Yuuki H."/>
            <person name="Oshima A."/>
            <person name="Sasaki N."/>
            <person name="Aotsuka S."/>
            <person name="Yoshikawa Y."/>
            <person name="Matsunawa H."/>
            <person name="Ichihara T."/>
            <person name="Shiohata N."/>
            <person name="Sano S."/>
            <person name="Moriya S."/>
            <person name="Momiyama H."/>
            <person name="Satoh N."/>
            <person name="Takami S."/>
            <person name="Terashima Y."/>
            <person name="Suzuki O."/>
            <person name="Nakagawa S."/>
            <person name="Senoh A."/>
            <person name="Mizoguchi H."/>
            <person name="Goto Y."/>
            <person name="Shimizu F."/>
            <person name="Wakebe H."/>
            <person name="Hishigaki H."/>
            <person name="Watanabe T."/>
            <person name="Sugiyama A."/>
            <person name="Takemoto M."/>
            <person name="Kawakami B."/>
            <person name="Yamazaki M."/>
            <person name="Watanabe K."/>
            <person name="Kumagai A."/>
            <person name="Itakura S."/>
            <person name="Fukuzumi Y."/>
            <person name="Fujimori Y."/>
            <person name="Komiyama M."/>
            <person name="Tashiro H."/>
            <person name="Tanigami A."/>
            <person name="Fujiwara T."/>
            <person name="Ono T."/>
            <person name="Yamada K."/>
            <person name="Fujii Y."/>
            <person name="Ozaki K."/>
            <person name="Hirao M."/>
            <person name="Ohmori Y."/>
            <person name="Kawabata A."/>
            <person name="Hikiji T."/>
            <person name="Kobatake N."/>
            <person name="Inagaki H."/>
            <person name="Ikema Y."/>
            <person name="Okamoto S."/>
            <person name="Okitani R."/>
            <person name="Kawakami T."/>
            <person name="Noguchi S."/>
            <person name="Itoh T."/>
            <person name="Shigeta K."/>
            <person name="Senba T."/>
            <person name="Matsumura K."/>
            <person name="Nakajima Y."/>
            <person name="Mizuno T."/>
            <person name="Morinaga M."/>
            <person name="Sasaki M."/>
            <person name="Togashi T."/>
            <person name="Oyama M."/>
            <person name="Hata H."/>
            <person name="Watanabe M."/>
            <person name="Komatsu T."/>
            <person name="Mizushima-Sugano J."/>
            <person name="Satoh T."/>
            <person name="Shirai Y."/>
            <person name="Takahashi Y."/>
            <person name="Nakagawa K."/>
            <person name="Okumura K."/>
            <person name="Nagase T."/>
            <person name="Nomura N."/>
            <person name="Kikuchi H."/>
            <person name="Masuho Y."/>
            <person name="Yamashita R."/>
            <person name="Nakai K."/>
            <person name="Yada T."/>
            <person name="Nakamura Y."/>
            <person name="Ohara O."/>
            <person name="Isogai T."/>
            <person name="Sugano S."/>
        </authorList>
    </citation>
    <scope>NUCLEOTIDE SEQUENCE [LARGE SCALE MRNA] (ISOFORM 3)</scope>
    <source>
        <tissue>Pericardium</tissue>
    </source>
</reference>
<reference key="7">
    <citation type="journal article" date="2005" name="Nature">
        <title>Generation and annotation of the DNA sequences of human chromosomes 2 and 4.</title>
        <authorList>
            <person name="Hillier L.W."/>
            <person name="Graves T.A."/>
            <person name="Fulton R.S."/>
            <person name="Fulton L.A."/>
            <person name="Pepin K.H."/>
            <person name="Minx P."/>
            <person name="Wagner-McPherson C."/>
            <person name="Layman D."/>
            <person name="Wylie K."/>
            <person name="Sekhon M."/>
            <person name="Becker M.C."/>
            <person name="Fewell G.A."/>
            <person name="Delehaunty K.D."/>
            <person name="Miner T.L."/>
            <person name="Nash W.E."/>
            <person name="Kremitzki C."/>
            <person name="Oddy L."/>
            <person name="Du H."/>
            <person name="Sun H."/>
            <person name="Bradshaw-Cordum H."/>
            <person name="Ali J."/>
            <person name="Carter J."/>
            <person name="Cordes M."/>
            <person name="Harris A."/>
            <person name="Isak A."/>
            <person name="van Brunt A."/>
            <person name="Nguyen C."/>
            <person name="Du F."/>
            <person name="Courtney L."/>
            <person name="Kalicki J."/>
            <person name="Ozersky P."/>
            <person name="Abbott S."/>
            <person name="Armstrong J."/>
            <person name="Belter E.A."/>
            <person name="Caruso L."/>
            <person name="Cedroni M."/>
            <person name="Cotton M."/>
            <person name="Davidson T."/>
            <person name="Desai A."/>
            <person name="Elliott G."/>
            <person name="Erb T."/>
            <person name="Fronick C."/>
            <person name="Gaige T."/>
            <person name="Haakenson W."/>
            <person name="Haglund K."/>
            <person name="Holmes A."/>
            <person name="Harkins R."/>
            <person name="Kim K."/>
            <person name="Kruchowski S.S."/>
            <person name="Strong C.M."/>
            <person name="Grewal N."/>
            <person name="Goyea E."/>
            <person name="Hou S."/>
            <person name="Levy A."/>
            <person name="Martinka S."/>
            <person name="Mead K."/>
            <person name="McLellan M.D."/>
            <person name="Meyer R."/>
            <person name="Randall-Maher J."/>
            <person name="Tomlinson C."/>
            <person name="Dauphin-Kohlberg S."/>
            <person name="Kozlowicz-Reilly A."/>
            <person name="Shah N."/>
            <person name="Swearengen-Shahid S."/>
            <person name="Snider J."/>
            <person name="Strong J.T."/>
            <person name="Thompson J."/>
            <person name="Yoakum M."/>
            <person name="Leonard S."/>
            <person name="Pearman C."/>
            <person name="Trani L."/>
            <person name="Radionenko M."/>
            <person name="Waligorski J.E."/>
            <person name="Wang C."/>
            <person name="Rock S.M."/>
            <person name="Tin-Wollam A.-M."/>
            <person name="Maupin R."/>
            <person name="Latreille P."/>
            <person name="Wendl M.C."/>
            <person name="Yang S.-P."/>
            <person name="Pohl C."/>
            <person name="Wallis J.W."/>
            <person name="Spieth J."/>
            <person name="Bieri T.A."/>
            <person name="Berkowicz N."/>
            <person name="Nelson J.O."/>
            <person name="Osborne J."/>
            <person name="Ding L."/>
            <person name="Meyer R."/>
            <person name="Sabo A."/>
            <person name="Shotland Y."/>
            <person name="Sinha P."/>
            <person name="Wohldmann P.E."/>
            <person name="Cook L.L."/>
            <person name="Hickenbotham M.T."/>
            <person name="Eldred J."/>
            <person name="Williams D."/>
            <person name="Jones T.A."/>
            <person name="She X."/>
            <person name="Ciccarelli F.D."/>
            <person name="Izaurralde E."/>
            <person name="Taylor J."/>
            <person name="Schmutz J."/>
            <person name="Myers R.M."/>
            <person name="Cox D.R."/>
            <person name="Huang X."/>
            <person name="McPherson J.D."/>
            <person name="Mardis E.R."/>
            <person name="Clifton S.W."/>
            <person name="Warren W.C."/>
            <person name="Chinwalla A.T."/>
            <person name="Eddy S.R."/>
            <person name="Marra M.A."/>
            <person name="Ovcharenko I."/>
            <person name="Furey T.S."/>
            <person name="Miller W."/>
            <person name="Eichler E.E."/>
            <person name="Bork P."/>
            <person name="Suyama M."/>
            <person name="Torrents D."/>
            <person name="Waterston R.H."/>
            <person name="Wilson R.K."/>
        </authorList>
    </citation>
    <scope>NUCLEOTIDE SEQUENCE [LARGE SCALE GENOMIC DNA]</scope>
</reference>
<reference key="8">
    <citation type="submission" date="2005-09" db="EMBL/GenBank/DDBJ databases">
        <authorList>
            <person name="Mural R.J."/>
            <person name="Istrail S."/>
            <person name="Sutton G.G."/>
            <person name="Florea L."/>
            <person name="Halpern A.L."/>
            <person name="Mobarry C.M."/>
            <person name="Lippert R."/>
            <person name="Walenz B."/>
            <person name="Shatkay H."/>
            <person name="Dew I."/>
            <person name="Miller J.R."/>
            <person name="Flanigan M.J."/>
            <person name="Edwards N.J."/>
            <person name="Bolanos R."/>
            <person name="Fasulo D."/>
            <person name="Halldorsson B.V."/>
            <person name="Hannenhalli S."/>
            <person name="Turner R."/>
            <person name="Yooseph S."/>
            <person name="Lu F."/>
            <person name="Nusskern D.R."/>
            <person name="Shue B.C."/>
            <person name="Zheng X.H."/>
            <person name="Zhong F."/>
            <person name="Delcher A.L."/>
            <person name="Huson D.H."/>
            <person name="Kravitz S.A."/>
            <person name="Mouchard L."/>
            <person name="Reinert K."/>
            <person name="Remington K.A."/>
            <person name="Clark A.G."/>
            <person name="Waterman M.S."/>
            <person name="Eichler E.E."/>
            <person name="Adams M.D."/>
            <person name="Hunkapiller M.W."/>
            <person name="Myers E.W."/>
            <person name="Venter J.C."/>
        </authorList>
    </citation>
    <scope>NUCLEOTIDE SEQUENCE [LARGE SCALE GENOMIC DNA]</scope>
</reference>
<reference key="9">
    <citation type="journal article" date="1989" name="Proc. Natl. Acad. Sci. U.S.A.">
        <title>A secreted form of the human lymphocyte cell surface molecule CD8 arises from alternative splicing.</title>
        <authorList>
            <person name="Giblin P."/>
            <person name="Ledbetter J.A."/>
            <person name="Kavathas P."/>
        </authorList>
    </citation>
    <scope>NUCLEOTIDE SEQUENCE OF 168-235 (ISOFORMS 1 AND 2)</scope>
</reference>
<reference key="10">
    <citation type="journal article" date="1983" name="J. Biol. Chem.">
        <title>The T8 antigen is a multimeric complex of two distinct subunits on human thymocytes but consists of homomultimeric forms on peripheral blood T lymphocytes.</title>
        <authorList>
            <person name="Snow P.M."/>
            <person name="Terhorst C."/>
        </authorList>
    </citation>
    <scope>SUBUNIT</scope>
</reference>
<reference key="11">
    <citation type="journal article" date="1989" name="Immunogenetics">
        <title>Phosphorylation and down-regulation of CD4 and CD8 in human CTLs and mouse L cells.</title>
        <authorList>
            <person name="DiSanto J.P."/>
            <person name="Klein J.S."/>
            <person name="Flomenberg N."/>
        </authorList>
    </citation>
    <scope>PHOSPHORYLATION</scope>
</reference>
<reference key="12">
    <citation type="journal article" date="1989" name="Nature">
        <title>Polymorphism in the alpha 3 domain of HLA-A molecules affects binding to CD8.</title>
        <authorList>
            <person name="Salter R.D."/>
            <person name="Norment A.M."/>
            <person name="Chen B.P."/>
            <person name="Clayberger C."/>
            <person name="Krensky A.M."/>
            <person name="Littman D.R."/>
            <person name="Parham P."/>
        </authorList>
    </citation>
    <scope>INTERACTION WITH HLA-A*02:01</scope>
</reference>
<reference key="13">
    <citation type="journal article" date="1992" name="J. Biol. Chem.">
        <title>Post-translational processing of an O-glycosylated protein, the human CD8 glycoprotein, during the intracellular transport to the plasma membrane.</title>
        <authorList>
            <person name="Pascale M.C."/>
            <person name="Erra M.C."/>
            <person name="Malagolini N."/>
            <person name="Serafini-Cessi F."/>
            <person name="Leone A."/>
            <person name="Bonatti S."/>
        </authorList>
    </citation>
    <scope>GLYCOSYLATION</scope>
    <scope>SUBCELLULAR LOCATION</scope>
</reference>
<reference key="14">
    <citation type="journal article" date="1994" name="Clin. Immunol. Immunopathol.">
        <title>A distinctive form of soluble CD8 is secreted by stimulated CD8+ cells in HIV-1-infected and high-risk individuals.</title>
        <authorList>
            <person name="Schlesinger M."/>
            <person name="Chu F.N."/>
            <person name="Badamchian M."/>
            <person name="Jiang J.D."/>
            <person name="Roboz J.P."/>
            <person name="Goldstein A.L."/>
            <person name="Bekesi J.G."/>
        </authorList>
    </citation>
    <scope>SUBCELLULAR LOCATION</scope>
</reference>
<reference key="15">
    <citation type="journal article" date="2003" name="Proc. Natl. Acad. Sci. U.S.A.">
        <title>Human inhibitory receptors Ig-like transcript 2 (ILT2) and ILT4 compete with CD8 for MHC class I binding and bind preferentially to HLA-G.</title>
        <authorList>
            <person name="Shiroishi M."/>
            <person name="Tsumoto K."/>
            <person name="Amano K."/>
            <person name="Shirakihara Y."/>
            <person name="Colonna M."/>
            <person name="Braud V.M."/>
            <person name="Allan D.S.J."/>
            <person name="Makadzange A."/>
            <person name="Rowland-Jones S."/>
            <person name="Willcox B.E."/>
            <person name="Jones E.Y."/>
            <person name="van der Merwe P.A."/>
            <person name="Kumagai I."/>
            <person name="Maenaka K."/>
        </authorList>
    </citation>
    <scope>SUBUNIT</scope>
    <scope>INTERACTION WITH HLA-G</scope>
</reference>
<reference key="16">
    <citation type="journal article" date="2005" name="Immunology">
        <title>Ligation of CD8alpha on human natural killer cells prevents activation-induced apoptosis and enhances cytolytic activity.</title>
        <authorList>
            <person name="Addison E.G."/>
            <person name="North J."/>
            <person name="Bakhsh I."/>
            <person name="Marden C."/>
            <person name="Haq S."/>
            <person name="Al-Sarraj S."/>
            <person name="Malayeri R."/>
            <person name="Wickremasinghe R.G."/>
            <person name="Davies J.K."/>
            <person name="Lowdell M.W."/>
        </authorList>
    </citation>
    <scope>FUNCTION</scope>
    <scope>TISSUE SPECIFICITY</scope>
</reference>
<reference key="17">
    <citation type="journal article" date="2007" name="BMC Immunol.">
        <title>CD8 alpha is expressed by human monocytes and enhances Fc gamma R-dependent responses.</title>
        <authorList>
            <person name="Gibbings D.J."/>
            <person name="Marcet-Palacios M."/>
            <person name="Sekar Y."/>
            <person name="Ng M.C."/>
            <person name="Befus A.D."/>
        </authorList>
    </citation>
    <scope>FUNCTION</scope>
    <scope>TISSUE SPECIFICITY</scope>
    <scope>SUBCELLULAR LOCATION</scope>
</reference>
<reference key="18">
    <citation type="journal article" date="2007" name="J. Biol. Chem.">
        <title>CD8 Raft localization is induced by its assembly into CD8alpha beta heterodimers, Not CD8alpha alpha homodimers.</title>
        <authorList>
            <person name="Pang D.J."/>
            <person name="Hayday A.C."/>
            <person name="Bijlmakers M.J."/>
        </authorList>
    </citation>
    <scope>SUBCELLULAR LOCATION</scope>
    <scope>PALMITOYLATION AT CYS-206</scope>
    <scope>MUTAGENESIS OF CYS-206</scope>
</reference>
<reference key="19">
    <citation type="journal article" date="2013" name="Nature">
        <title>Immune surveillance by CD8alphaalpha+ skin-resident T cells in human herpes virus infection.</title>
        <authorList>
            <person name="Zhu J."/>
            <person name="Peng T."/>
            <person name="Johnston C."/>
            <person name="Phasouk K."/>
            <person name="Kask A.S."/>
            <person name="Klock A."/>
            <person name="Jin L."/>
            <person name="Diem K."/>
            <person name="Koelle D.M."/>
            <person name="Wald A."/>
            <person name="Robins H."/>
            <person name="Corey L."/>
        </authorList>
    </citation>
    <scope>FUNCTION</scope>
</reference>
<reference key="20">
    <citation type="journal article" date="2015" name="Front. Microbiol.">
        <title>A subset of human plasmacytoid dendritic cells expresses CD8alpha upon exposure to herpes simplex virus type 1.</title>
        <authorList>
            <person name="Schuster P."/>
            <person name="Thomann S."/>
            <person name="Werner M."/>
            <person name="Vollmer J."/>
            <person name="Schmidt B."/>
        </authorList>
    </citation>
    <scope>FUNCTION</scope>
    <scope>TISSUE SPECIFICITY</scope>
</reference>
<reference key="21">
    <citation type="journal article" date="1992" name="Cell">
        <title>Crystal structure of a soluble form of the human T cell coreceptor CD8 at 2.6-A resolution.</title>
        <authorList>
            <person name="Leahy D.J."/>
            <person name="Axel R."/>
            <person name="Hendrickson W.A."/>
        </authorList>
    </citation>
    <scope>X-RAY CRYSTALLOGRAPHY (2.60 ANGSTROMS) OF 22-135</scope>
    <scope>DISULFIDE BOND</scope>
</reference>
<reference key="22">
    <citation type="journal article" date="1997" name="Nature">
        <title>Crystal structure of the complex between human CD8alpha(alpha) and HLA-A2.</title>
        <authorList>
            <person name="Gao G.F."/>
            <person name="Tormo J."/>
            <person name="Gerth U.C."/>
            <person name="Wyer J.R."/>
            <person name="McMichael A.J."/>
            <person name="Stuart D.I."/>
            <person name="Bell J.I."/>
            <person name="Jones E.Y."/>
            <person name="Jakobsen B.K."/>
        </authorList>
    </citation>
    <scope>X-RAY CRYSTALLOGRAPHY (2.65 ANGSTROMS) OF 22-141 IN COMPLEX WITH HLA-A/B2M DIMER</scope>
    <scope>DISULFIDE BOND</scope>
</reference>
<reference key="23">
    <citation type="journal article" date="2003" name="Science">
        <title>A zinc clasp structure tethers Lck to T cell coreceptors CD4 and CD8.</title>
        <authorList>
            <person name="Kim P.W."/>
            <person name="Sun Z.Y."/>
            <person name="Blacklow S.C."/>
            <person name="Wagner G."/>
            <person name="Eck M.J."/>
        </authorList>
    </citation>
    <scope>STRUCTURE BY NMR OF 209-227 IN COMPLEX WITH LCK</scope>
</reference>
<reference key="24">
    <citation type="journal article" date="2001" name="J. Clin. Invest.">
        <title>Familial CD8 deficiency due to a mutation in the CD8 alpha gene.</title>
        <authorList>
            <person name="de la Calle-Martin O."/>
            <person name="Hernandez M."/>
            <person name="Ordi J."/>
            <person name="Casamitjana N."/>
            <person name="Arostegui J.I."/>
            <person name="Caragol I."/>
            <person name="Ferrando M."/>
            <person name="Labrador M."/>
            <person name="Rodriguez-Sanchez J.L."/>
            <person name="Espanol T."/>
        </authorList>
    </citation>
    <scope>VARIANT IMD116 SER-111</scope>
    <scope>MUTAGENESIS OF GLY-111</scope>
</reference>
<reference key="25">
    <citation type="journal article" date="2008" name="Mol. Immunol.">
        <title>Gly111Ser mutation in CD8A gene causing CD8 immunodeficiency is found in Spanish Gypsies.</title>
        <authorList>
            <person name="Mancebo E."/>
            <person name="Moreno-Pelayo M.A."/>
            <person name="Mencia A."/>
            <person name="de la Calle-Martin O."/>
            <person name="Allende L.M."/>
            <person name="Sivadorai P."/>
            <person name="Kalaydjieva L."/>
            <person name="Bertranpetit J."/>
            <person name="Coto E."/>
            <person name="Calleja-Antolin S."/>
            <person name="Ruiz-Contreras J."/>
            <person name="Paz-Artal E."/>
        </authorList>
    </citation>
    <scope>VARIANT IMD116 SER-111</scope>
</reference>
<dbReference type="EMBL" id="M26315">
    <property type="protein sequence ID" value="AAA79217.1"/>
    <property type="molecule type" value="Genomic_DNA"/>
</dbReference>
<dbReference type="EMBL" id="M26313">
    <property type="protein sequence ID" value="AAA79217.1"/>
    <property type="status" value="JOINED"/>
    <property type="molecule type" value="Genomic_DNA"/>
</dbReference>
<dbReference type="EMBL" id="M26314">
    <property type="protein sequence ID" value="AAA79217.1"/>
    <property type="status" value="JOINED"/>
    <property type="molecule type" value="Genomic_DNA"/>
</dbReference>
<dbReference type="EMBL" id="M26315">
    <property type="protein sequence ID" value="AAA79218.1"/>
    <property type="molecule type" value="Genomic_DNA"/>
</dbReference>
<dbReference type="EMBL" id="M26313">
    <property type="protein sequence ID" value="AAA79218.1"/>
    <property type="status" value="JOINED"/>
    <property type="molecule type" value="Genomic_DNA"/>
</dbReference>
<dbReference type="EMBL" id="M26314">
    <property type="protein sequence ID" value="AAA79218.1"/>
    <property type="status" value="JOINED"/>
    <property type="molecule type" value="Genomic_DNA"/>
</dbReference>
<dbReference type="EMBL" id="M12824">
    <property type="protein sequence ID" value="AAA61133.1"/>
    <property type="molecule type" value="mRNA"/>
</dbReference>
<dbReference type="EMBL" id="M12828">
    <property type="protein sequence ID" value="AAB04637.1"/>
    <property type="molecule type" value="mRNA"/>
</dbReference>
<dbReference type="EMBL" id="M27161">
    <property type="protein sequence ID" value="AAA59674.1"/>
    <property type="molecule type" value="Genomic_DNA"/>
</dbReference>
<dbReference type="EMBL" id="AK300089">
    <property type="protein sequence ID" value="BAG61892.1"/>
    <property type="molecule type" value="mRNA"/>
</dbReference>
<dbReference type="EMBL" id="AC064848">
    <property type="protein sequence ID" value="AAX88864.1"/>
    <property type="molecule type" value="Genomic_DNA"/>
</dbReference>
<dbReference type="EMBL" id="AC112696">
    <property type="status" value="NOT_ANNOTATED_CDS"/>
    <property type="molecule type" value="Genomic_DNA"/>
</dbReference>
<dbReference type="EMBL" id="CH471053">
    <property type="protein sequence ID" value="EAW99438.1"/>
    <property type="molecule type" value="Genomic_DNA"/>
</dbReference>
<dbReference type="EMBL" id="CH471053">
    <property type="protein sequence ID" value="EAW99439.1"/>
    <property type="molecule type" value="Genomic_DNA"/>
</dbReference>
<dbReference type="EMBL" id="CH471053">
    <property type="protein sequence ID" value="EAW99440.1"/>
    <property type="molecule type" value="Genomic_DNA"/>
</dbReference>
<dbReference type="CCDS" id="CCDS1992.1">
    <molecule id="P01732-1"/>
</dbReference>
<dbReference type="CCDS" id="CCDS1993.1">
    <molecule id="P01732-2"/>
</dbReference>
<dbReference type="PIR" id="A30604">
    <property type="entry name" value="RWHUT8"/>
</dbReference>
<dbReference type="RefSeq" id="NP_001139345.1">
    <molecule id="P01732-1"/>
    <property type="nucleotide sequence ID" value="NM_001145873.1"/>
</dbReference>
<dbReference type="RefSeq" id="NP_001369627.1">
    <molecule id="P01732-1"/>
    <property type="nucleotide sequence ID" value="NM_001382698.1"/>
</dbReference>
<dbReference type="RefSeq" id="NP_001759.3">
    <molecule id="P01732-1"/>
    <property type="nucleotide sequence ID" value="NM_001768.6"/>
</dbReference>
<dbReference type="RefSeq" id="NP_741969.1">
    <molecule id="P01732-2"/>
    <property type="nucleotide sequence ID" value="NM_171827.4"/>
</dbReference>
<dbReference type="PDB" id="1AKJ">
    <property type="method" value="X-ray"/>
    <property type="resolution" value="2.65 A"/>
    <property type="chains" value="D/E=22-141"/>
</dbReference>
<dbReference type="PDB" id="1CD8">
    <property type="method" value="X-ray"/>
    <property type="resolution" value="2.60 A"/>
    <property type="chains" value="A=22-135"/>
</dbReference>
<dbReference type="PDB" id="1Q69">
    <property type="method" value="NMR"/>
    <property type="chains" value="A=209-227"/>
</dbReference>
<dbReference type="PDB" id="2HP4">
    <property type="method" value="X-ray"/>
    <property type="resolution" value="2.10 A"/>
    <property type="chains" value="A/B=22-135"/>
</dbReference>
<dbReference type="PDB" id="3QZW">
    <property type="method" value="X-ray"/>
    <property type="resolution" value="2.80 A"/>
    <property type="chains" value="G/H/I/J=22-135"/>
</dbReference>
<dbReference type="PDB" id="7UMG">
    <property type="method" value="X-ray"/>
    <property type="resolution" value="2.40 A"/>
    <property type="chains" value="C/D=22-141"/>
</dbReference>
<dbReference type="PDB" id="7UVF">
    <property type="method" value="X-ray"/>
    <property type="resolution" value="2.60 A"/>
    <property type="chains" value="A/B=22-141"/>
</dbReference>
<dbReference type="PDB" id="8EW6">
    <property type="method" value="X-ray"/>
    <property type="resolution" value="1.90 A"/>
    <property type="chains" value="W=22-141"/>
</dbReference>
<dbReference type="PDBsum" id="1AKJ"/>
<dbReference type="PDBsum" id="1CD8"/>
<dbReference type="PDBsum" id="1Q69"/>
<dbReference type="PDBsum" id="2HP4"/>
<dbReference type="PDBsum" id="3QZW"/>
<dbReference type="PDBsum" id="7UMG"/>
<dbReference type="PDBsum" id="7UVF"/>
<dbReference type="PDBsum" id="8EW6"/>
<dbReference type="SMR" id="P01732"/>
<dbReference type="BioGRID" id="107363">
    <property type="interactions" value="93"/>
</dbReference>
<dbReference type="ComplexPortal" id="CPX-6741">
    <property type="entry name" value="CD8alpha-beta complex"/>
</dbReference>
<dbReference type="ComplexPortal" id="CPX-6743">
    <property type="entry name" value="CD8alpha-alpha complex"/>
</dbReference>
<dbReference type="CORUM" id="P01732"/>
<dbReference type="FunCoup" id="P01732">
    <property type="interactions" value="734"/>
</dbReference>
<dbReference type="IntAct" id="P01732">
    <property type="interactions" value="11"/>
</dbReference>
<dbReference type="STRING" id="9606.ENSP00000386559"/>
<dbReference type="GlyCosmos" id="P01732">
    <property type="glycosylation" value="1 site, 2 glycans"/>
</dbReference>
<dbReference type="GlyGen" id="P01732">
    <property type="glycosylation" value="3 sites, 2 O-linked glycans (1 site)"/>
</dbReference>
<dbReference type="iPTMnet" id="P01732"/>
<dbReference type="PhosphoSitePlus" id="P01732"/>
<dbReference type="SwissPalm" id="P01732"/>
<dbReference type="BioMuta" id="CD8A"/>
<dbReference type="DMDM" id="116035"/>
<dbReference type="MassIVE" id="P01732"/>
<dbReference type="PaxDb" id="9606-ENSP00000386559"/>
<dbReference type="PeptideAtlas" id="P01732"/>
<dbReference type="ProteomicsDB" id="5085"/>
<dbReference type="ProteomicsDB" id="51452">
    <molecule id="P01732-1"/>
</dbReference>
<dbReference type="ProteomicsDB" id="51453">
    <molecule id="P01732-2"/>
</dbReference>
<dbReference type="ABCD" id="P01732">
    <property type="antibodies" value="99 sequenced antibodies"/>
</dbReference>
<dbReference type="Antibodypedia" id="3495">
    <property type="antibodies" value="5265 antibodies from 58 providers"/>
</dbReference>
<dbReference type="CPTC" id="P01732">
    <property type="antibodies" value="1 antibody"/>
</dbReference>
<dbReference type="DNASU" id="925"/>
<dbReference type="Ensembl" id="ENST00000283635.8">
    <molecule id="P01732-1"/>
    <property type="protein sequence ID" value="ENSP00000283635.3"/>
    <property type="gene ID" value="ENSG00000153563.17"/>
</dbReference>
<dbReference type="Ensembl" id="ENST00000352580.7">
    <molecule id="P01732-2"/>
    <property type="protein sequence ID" value="ENSP00000321631.3"/>
    <property type="gene ID" value="ENSG00000153563.17"/>
</dbReference>
<dbReference type="Ensembl" id="ENST00000409511.6">
    <molecule id="P01732-1"/>
    <property type="protein sequence ID" value="ENSP00000386559.2"/>
    <property type="gene ID" value="ENSG00000153563.17"/>
</dbReference>
<dbReference type="Ensembl" id="ENST00000699439.1">
    <molecule id="P01732-2"/>
    <property type="protein sequence ID" value="ENSP00000514390.1"/>
    <property type="gene ID" value="ENSG00000153563.17"/>
</dbReference>
<dbReference type="GeneID" id="925"/>
<dbReference type="KEGG" id="hsa:925"/>
<dbReference type="MANE-Select" id="ENST00000283635.8">
    <property type="protein sequence ID" value="ENSP00000283635.3"/>
    <property type="RefSeq nucleotide sequence ID" value="NM_001768.7"/>
    <property type="RefSeq protein sequence ID" value="NP_001759.3"/>
</dbReference>
<dbReference type="UCSC" id="uc002srt.4">
    <molecule id="P01732-1"/>
    <property type="organism name" value="human"/>
</dbReference>
<dbReference type="AGR" id="HGNC:1706"/>
<dbReference type="CTD" id="925"/>
<dbReference type="DisGeNET" id="925"/>
<dbReference type="GeneCards" id="CD8A"/>
<dbReference type="HGNC" id="HGNC:1706">
    <property type="gene designation" value="CD8A"/>
</dbReference>
<dbReference type="HPA" id="ENSG00000153563">
    <property type="expression patterns" value="Tissue enriched (lymphoid)"/>
</dbReference>
<dbReference type="MalaCards" id="CD8A"/>
<dbReference type="MIM" id="186910">
    <property type="type" value="gene"/>
</dbReference>
<dbReference type="MIM" id="608957">
    <property type="type" value="phenotype"/>
</dbReference>
<dbReference type="neXtProt" id="NX_P01732"/>
<dbReference type="OpenTargets" id="ENSG00000153563"/>
<dbReference type="Orphanet" id="169085">
    <property type="disease" value="Susceptibility to respiratory infections associated with CD8alpha chain mutation"/>
</dbReference>
<dbReference type="PharmGKB" id="PA26244"/>
<dbReference type="VEuPathDB" id="HostDB:ENSG00000153563"/>
<dbReference type="eggNOG" id="ENOG502SAZN">
    <property type="taxonomic scope" value="Eukaryota"/>
</dbReference>
<dbReference type="GeneTree" id="ENSGT00940000156588"/>
<dbReference type="HOGENOM" id="CLU_085753_0_0_1"/>
<dbReference type="InParanoid" id="P01732"/>
<dbReference type="OMA" id="KCKCIRP"/>
<dbReference type="OrthoDB" id="9906515at2759"/>
<dbReference type="PAN-GO" id="P01732">
    <property type="GO annotations" value="4 GO annotations based on evolutionary models"/>
</dbReference>
<dbReference type="PhylomeDB" id="P01732"/>
<dbReference type="TreeFam" id="TF336070"/>
<dbReference type="PathwayCommons" id="P01732"/>
<dbReference type="Reactome" id="R-HSA-198933">
    <property type="pathway name" value="Immunoregulatory interactions between a Lymphoid and a non-Lymphoid cell"/>
</dbReference>
<dbReference type="SignaLink" id="P01732"/>
<dbReference type="SIGNOR" id="P01732"/>
<dbReference type="BioGRID-ORCS" id="925">
    <property type="hits" value="27 hits in 1144 CRISPR screens"/>
</dbReference>
<dbReference type="ChiTaRS" id="CD8A">
    <property type="organism name" value="human"/>
</dbReference>
<dbReference type="EvolutionaryTrace" id="P01732"/>
<dbReference type="GeneWiki" id="CD8A"/>
<dbReference type="GenomeRNAi" id="925"/>
<dbReference type="Pharos" id="P01732">
    <property type="development level" value="Tbio"/>
</dbReference>
<dbReference type="PRO" id="PR:P01732"/>
<dbReference type="Proteomes" id="UP000005640">
    <property type="component" value="Chromosome 2"/>
</dbReference>
<dbReference type="RNAct" id="P01732">
    <property type="molecule type" value="protein"/>
</dbReference>
<dbReference type="Bgee" id="ENSG00000153563">
    <property type="expression patterns" value="Expressed in thymus and 136 other cell types or tissues"/>
</dbReference>
<dbReference type="ExpressionAtlas" id="P01732">
    <property type="expression patterns" value="baseline and differential"/>
</dbReference>
<dbReference type="GO" id="GO:0009897">
    <property type="term" value="C:external side of plasma membrane"/>
    <property type="evidence" value="ECO:0000314"/>
    <property type="project" value="MGI"/>
</dbReference>
<dbReference type="GO" id="GO:0005576">
    <property type="term" value="C:extracellular region"/>
    <property type="evidence" value="ECO:0007669"/>
    <property type="project" value="UniProtKB-SubCell"/>
</dbReference>
<dbReference type="GO" id="GO:0005886">
    <property type="term" value="C:plasma membrane"/>
    <property type="evidence" value="ECO:0000314"/>
    <property type="project" value="HPA"/>
</dbReference>
<dbReference type="GO" id="GO:0044853">
    <property type="term" value="C:plasma membrane raft"/>
    <property type="evidence" value="ECO:0000314"/>
    <property type="project" value="UniProtKB"/>
</dbReference>
<dbReference type="GO" id="GO:0043235">
    <property type="term" value="C:receptor complex"/>
    <property type="evidence" value="ECO:0000353"/>
    <property type="project" value="ComplexPortal"/>
</dbReference>
<dbReference type="GO" id="GO:0042101">
    <property type="term" value="C:T cell receptor complex"/>
    <property type="evidence" value="ECO:0000303"/>
    <property type="project" value="UniProtKB"/>
</dbReference>
<dbReference type="GO" id="GO:0015026">
    <property type="term" value="F:coreceptor activity"/>
    <property type="evidence" value="ECO:0000303"/>
    <property type="project" value="UniProtKB"/>
</dbReference>
<dbReference type="GO" id="GO:0042288">
    <property type="term" value="F:MHC class I protein binding"/>
    <property type="evidence" value="ECO:0000303"/>
    <property type="project" value="UniProtKB"/>
</dbReference>
<dbReference type="GO" id="GO:0023024">
    <property type="term" value="F:MHC class I protein complex binding"/>
    <property type="evidence" value="ECO:0000314"/>
    <property type="project" value="UniProtKB"/>
</dbReference>
<dbReference type="GO" id="GO:0002250">
    <property type="term" value="P:adaptive immune response"/>
    <property type="evidence" value="ECO:0000303"/>
    <property type="project" value="ComplexPortal"/>
</dbReference>
<dbReference type="GO" id="GO:0019882">
    <property type="term" value="P:antigen processing and presentation"/>
    <property type="evidence" value="ECO:0000303"/>
    <property type="project" value="UniProtKB"/>
</dbReference>
<dbReference type="GO" id="GO:0007169">
    <property type="term" value="P:cell surface receptor protein tyrosine kinase signaling pathway"/>
    <property type="evidence" value="ECO:0000303"/>
    <property type="project" value="UniProtKB"/>
</dbReference>
<dbReference type="GO" id="GO:0007166">
    <property type="term" value="P:cell surface receptor signaling pathway"/>
    <property type="evidence" value="ECO:0000318"/>
    <property type="project" value="GO_Central"/>
</dbReference>
<dbReference type="GO" id="GO:0045065">
    <property type="term" value="P:cytotoxic T cell differentiation"/>
    <property type="evidence" value="ECO:0000318"/>
    <property type="project" value="GO_Central"/>
</dbReference>
<dbReference type="GO" id="GO:0006955">
    <property type="term" value="P:immune response"/>
    <property type="evidence" value="ECO:0000303"/>
    <property type="project" value="UniProtKB"/>
</dbReference>
<dbReference type="GO" id="GO:0042110">
    <property type="term" value="P:T cell activation"/>
    <property type="evidence" value="ECO:0000314"/>
    <property type="project" value="ComplexPortal"/>
</dbReference>
<dbReference type="GO" id="GO:0002456">
    <property type="term" value="P:T cell mediated immunity"/>
    <property type="evidence" value="ECO:0000318"/>
    <property type="project" value="GO_Central"/>
</dbReference>
<dbReference type="GO" id="GO:0050852">
    <property type="term" value="P:T cell receptor signaling pathway"/>
    <property type="evidence" value="ECO:0000314"/>
    <property type="project" value="ComplexPortal"/>
</dbReference>
<dbReference type="CDD" id="cd05720">
    <property type="entry name" value="IgV_CD8_alpha"/>
    <property type="match status" value="1"/>
</dbReference>
<dbReference type="FunFam" id="2.60.40.10:FF:000956">
    <property type="entry name" value="T-cell surface glycoprotein CD8 alpha chain"/>
    <property type="match status" value="1"/>
</dbReference>
<dbReference type="Gene3D" id="2.60.40.10">
    <property type="entry name" value="Immunoglobulins"/>
    <property type="match status" value="1"/>
</dbReference>
<dbReference type="InterPro" id="IPR015468">
    <property type="entry name" value="CD8_asu"/>
</dbReference>
<dbReference type="InterPro" id="IPR007110">
    <property type="entry name" value="Ig-like_dom"/>
</dbReference>
<dbReference type="InterPro" id="IPR036179">
    <property type="entry name" value="Ig-like_dom_sf"/>
</dbReference>
<dbReference type="InterPro" id="IPR013783">
    <property type="entry name" value="Ig-like_fold"/>
</dbReference>
<dbReference type="InterPro" id="IPR003599">
    <property type="entry name" value="Ig_sub"/>
</dbReference>
<dbReference type="InterPro" id="IPR013106">
    <property type="entry name" value="Ig_V-set"/>
</dbReference>
<dbReference type="PANTHER" id="PTHR10441">
    <property type="entry name" value="CD8 ALPHA CHAIN"/>
    <property type="match status" value="1"/>
</dbReference>
<dbReference type="PANTHER" id="PTHR10441:SF2">
    <property type="entry name" value="T-CELL SURFACE GLYCOPROTEIN CD8 ALPHA CHAIN"/>
    <property type="match status" value="1"/>
</dbReference>
<dbReference type="Pfam" id="PF07686">
    <property type="entry name" value="V-set"/>
    <property type="match status" value="1"/>
</dbReference>
<dbReference type="SMART" id="SM00409">
    <property type="entry name" value="IG"/>
    <property type="match status" value="1"/>
</dbReference>
<dbReference type="SMART" id="SM00406">
    <property type="entry name" value="IGv"/>
    <property type="match status" value="1"/>
</dbReference>
<dbReference type="SUPFAM" id="SSF48726">
    <property type="entry name" value="Immunoglobulin"/>
    <property type="match status" value="1"/>
</dbReference>
<dbReference type="PROSITE" id="PS50835">
    <property type="entry name" value="IG_LIKE"/>
    <property type="match status" value="1"/>
</dbReference>
<name>CD8A_HUMAN</name>